<reference key="1">
    <citation type="journal article" date="2005" name="PLoS Biol.">
        <title>The genomes of Oryza sativa: a history of duplications.</title>
        <authorList>
            <person name="Yu J."/>
            <person name="Wang J."/>
            <person name="Lin W."/>
            <person name="Li S."/>
            <person name="Li H."/>
            <person name="Zhou J."/>
            <person name="Ni P."/>
            <person name="Dong W."/>
            <person name="Hu S."/>
            <person name="Zeng C."/>
            <person name="Zhang J."/>
            <person name="Zhang Y."/>
            <person name="Li R."/>
            <person name="Xu Z."/>
            <person name="Li S."/>
            <person name="Li X."/>
            <person name="Zheng H."/>
            <person name="Cong L."/>
            <person name="Lin L."/>
            <person name="Yin J."/>
            <person name="Geng J."/>
            <person name="Li G."/>
            <person name="Shi J."/>
            <person name="Liu J."/>
            <person name="Lv H."/>
            <person name="Li J."/>
            <person name="Wang J."/>
            <person name="Deng Y."/>
            <person name="Ran L."/>
            <person name="Shi X."/>
            <person name="Wang X."/>
            <person name="Wu Q."/>
            <person name="Li C."/>
            <person name="Ren X."/>
            <person name="Wang J."/>
            <person name="Wang X."/>
            <person name="Li D."/>
            <person name="Liu D."/>
            <person name="Zhang X."/>
            <person name="Ji Z."/>
            <person name="Zhao W."/>
            <person name="Sun Y."/>
            <person name="Zhang Z."/>
            <person name="Bao J."/>
            <person name="Han Y."/>
            <person name="Dong L."/>
            <person name="Ji J."/>
            <person name="Chen P."/>
            <person name="Wu S."/>
            <person name="Liu J."/>
            <person name="Xiao Y."/>
            <person name="Bu D."/>
            <person name="Tan J."/>
            <person name="Yang L."/>
            <person name="Ye C."/>
            <person name="Zhang J."/>
            <person name="Xu J."/>
            <person name="Zhou Y."/>
            <person name="Yu Y."/>
            <person name="Zhang B."/>
            <person name="Zhuang S."/>
            <person name="Wei H."/>
            <person name="Liu B."/>
            <person name="Lei M."/>
            <person name="Yu H."/>
            <person name="Li Y."/>
            <person name="Xu H."/>
            <person name="Wei S."/>
            <person name="He X."/>
            <person name="Fang L."/>
            <person name="Zhang Z."/>
            <person name="Zhang Y."/>
            <person name="Huang X."/>
            <person name="Su Z."/>
            <person name="Tong W."/>
            <person name="Li J."/>
            <person name="Tong Z."/>
            <person name="Li S."/>
            <person name="Ye J."/>
            <person name="Wang L."/>
            <person name="Fang L."/>
            <person name="Lei T."/>
            <person name="Chen C.-S."/>
            <person name="Chen H.-C."/>
            <person name="Xu Z."/>
            <person name="Li H."/>
            <person name="Huang H."/>
            <person name="Zhang F."/>
            <person name="Xu H."/>
            <person name="Li N."/>
            <person name="Zhao C."/>
            <person name="Li S."/>
            <person name="Dong L."/>
            <person name="Huang Y."/>
            <person name="Li L."/>
            <person name="Xi Y."/>
            <person name="Qi Q."/>
            <person name="Li W."/>
            <person name="Zhang B."/>
            <person name="Hu W."/>
            <person name="Zhang Y."/>
            <person name="Tian X."/>
            <person name="Jiao Y."/>
            <person name="Liang X."/>
            <person name="Jin J."/>
            <person name="Gao L."/>
            <person name="Zheng W."/>
            <person name="Hao B."/>
            <person name="Liu S.-M."/>
            <person name="Wang W."/>
            <person name="Yuan L."/>
            <person name="Cao M."/>
            <person name="McDermott J."/>
            <person name="Samudrala R."/>
            <person name="Wang J."/>
            <person name="Wong G.K.-S."/>
            <person name="Yang H."/>
        </authorList>
    </citation>
    <scope>NUCLEOTIDE SEQUENCE [LARGE SCALE GENOMIC DNA]</scope>
    <source>
        <strain>cv. 93-11</strain>
    </source>
</reference>
<sequence>MASLVLSLRIAPSTPPLGLGGGRFRGRRGAVACRAATFQQLDAVAVREEESKFKAGAAEGCNILPLKRCIFSDHLTPVLAYRCLVREDDREAPSFLFESVEQGSEGTNVGRYSVVGAQPAMEIVAKANHVTVMDHKMKSRREQFAPDPMKIPRSIMEQWNPQIVEGLPDAFCGGWVGFFSYDTVRYVETKKLPFSNAPEDDRNLPDIHLGLYNDIVVFDHVEKKTHVIHWVRVDCHESVDEAYEDGKNQLEALLSRLHSVNVPTLTAGSVKLNVGQFGSALQKSSMSREDYKKAVVQAKEHILAGDIFQVVLSQRFERRTFADPFEVYRALRIVNPSPYMAYLQARGCILVASSPEILTRVEKRTIVNRPLAGTIRRGKSKAEDKVLEQLLLSDEKQCAEHIMLVDLGRNDVGKVSKPGSVKVEKLMNVERYSHVMHISSTVTGELRDDLTCWDALRAALPVGTVSGAPKVRAMELIDQMEGKMRGPYSGGFGGVSFRGDMDIALALRTIVFPTGSRFDTMYSYTDKNARQEWVAHLQAGAGIVADSKPDDEHQECLNKAAGLARAIDLAESTFVDE</sequence>
<proteinExistence type="inferred from homology"/>
<evidence type="ECO:0000250" key="1"/>
<evidence type="ECO:0000255" key="2"/>
<evidence type="ECO:0000305" key="3"/>
<name>ASA1_ORYSI</name>
<comment type="function">
    <text evidence="1">Part of a heterotetrameric complex that catalyzes the two-step biosynthesis of anthranilate, an intermediate in the biosynthesis of L-tryptophan. In the first step, the glutamine-binding beta subunit of anthranilate synthase (AS) provides the glutamine amidotransferase activity which generates ammonia as a substrate that, along with chorismate, is used in the second step, catalyzed by the large alpha subunit of AS to produce anthranilate (By similarity).</text>
</comment>
<comment type="catalytic activity">
    <reaction>
        <text>chorismate + L-glutamine = anthranilate + pyruvate + L-glutamate + H(+)</text>
        <dbReference type="Rhea" id="RHEA:21732"/>
        <dbReference type="ChEBI" id="CHEBI:15361"/>
        <dbReference type="ChEBI" id="CHEBI:15378"/>
        <dbReference type="ChEBI" id="CHEBI:16567"/>
        <dbReference type="ChEBI" id="CHEBI:29748"/>
        <dbReference type="ChEBI" id="CHEBI:29985"/>
        <dbReference type="ChEBI" id="CHEBI:58359"/>
        <dbReference type="EC" id="4.1.3.27"/>
    </reaction>
</comment>
<comment type="activity regulation">
    <text evidence="1">Feedback inhibition by tryptophan.</text>
</comment>
<comment type="pathway">
    <text>Amino-acid biosynthesis; L-tryptophan biosynthesis; L-tryptophan from chorismate: step 1/5.</text>
</comment>
<comment type="subunit">
    <text evidence="1">Heterotetramer consisting of two non-identical subunits: a beta subunit and a large alpha subunit.</text>
</comment>
<comment type="subcellular location">
    <subcellularLocation>
        <location evidence="3">Plastid</location>
        <location evidence="3">Chloroplast</location>
    </subcellularLocation>
</comment>
<comment type="similarity">
    <text evidence="3">Belongs to the anthranilate synthase component I family.</text>
</comment>
<accession>A2XNK3</accession>
<dbReference type="EC" id="4.1.3.27"/>
<dbReference type="EMBL" id="CM000128">
    <property type="protein sequence ID" value="EAY92413.1"/>
    <property type="molecule type" value="Genomic_DNA"/>
</dbReference>
<dbReference type="SMR" id="A2XNK3"/>
<dbReference type="STRING" id="39946.A2XNK3"/>
<dbReference type="EnsemblPlants" id="BGIOSGA009526-TA">
    <property type="protein sequence ID" value="BGIOSGA009526-PA"/>
    <property type="gene ID" value="BGIOSGA009526"/>
</dbReference>
<dbReference type="Gramene" id="BGIOSGA009526-TA">
    <property type="protein sequence ID" value="BGIOSGA009526-PA"/>
    <property type="gene ID" value="BGIOSGA009526"/>
</dbReference>
<dbReference type="HOGENOM" id="CLU_006493_9_3_1"/>
<dbReference type="OMA" id="HGRMDTS"/>
<dbReference type="UniPathway" id="UPA00035">
    <property type="reaction ID" value="UER00040"/>
</dbReference>
<dbReference type="Proteomes" id="UP000007015">
    <property type="component" value="Chromosome 3"/>
</dbReference>
<dbReference type="GO" id="GO:0009507">
    <property type="term" value="C:chloroplast"/>
    <property type="evidence" value="ECO:0007669"/>
    <property type="project" value="UniProtKB-SubCell"/>
</dbReference>
<dbReference type="GO" id="GO:0004049">
    <property type="term" value="F:anthranilate synthase activity"/>
    <property type="evidence" value="ECO:0007669"/>
    <property type="project" value="UniProtKB-EC"/>
</dbReference>
<dbReference type="GO" id="GO:0000162">
    <property type="term" value="P:L-tryptophan biosynthetic process"/>
    <property type="evidence" value="ECO:0007669"/>
    <property type="project" value="UniProtKB-UniPathway"/>
</dbReference>
<dbReference type="FunFam" id="3.60.120.10:FF:000003">
    <property type="entry name" value="Anthranilate synthase component 1"/>
    <property type="match status" value="1"/>
</dbReference>
<dbReference type="Gene3D" id="3.60.120.10">
    <property type="entry name" value="Anthranilate synthase"/>
    <property type="match status" value="1"/>
</dbReference>
<dbReference type="InterPro" id="IPR005801">
    <property type="entry name" value="ADC_synthase"/>
</dbReference>
<dbReference type="InterPro" id="IPR019999">
    <property type="entry name" value="Anth_synth_I-like"/>
</dbReference>
<dbReference type="InterPro" id="IPR006805">
    <property type="entry name" value="Anth_synth_I_N"/>
</dbReference>
<dbReference type="InterPro" id="IPR005256">
    <property type="entry name" value="Anth_synth_I_PabB"/>
</dbReference>
<dbReference type="InterPro" id="IPR015890">
    <property type="entry name" value="Chorismate_C"/>
</dbReference>
<dbReference type="NCBIfam" id="TIGR00564">
    <property type="entry name" value="trpE_most"/>
    <property type="match status" value="1"/>
</dbReference>
<dbReference type="PANTHER" id="PTHR11236">
    <property type="entry name" value="AMINOBENZOATE/ANTHRANILATE SYNTHASE"/>
    <property type="match status" value="1"/>
</dbReference>
<dbReference type="PANTHER" id="PTHR11236:SF9">
    <property type="entry name" value="ANTHRANILATE SYNTHASE COMPONENT 1"/>
    <property type="match status" value="1"/>
</dbReference>
<dbReference type="Pfam" id="PF04715">
    <property type="entry name" value="Anth_synt_I_N"/>
    <property type="match status" value="1"/>
</dbReference>
<dbReference type="Pfam" id="PF00425">
    <property type="entry name" value="Chorismate_bind"/>
    <property type="match status" value="1"/>
</dbReference>
<dbReference type="PRINTS" id="PR00095">
    <property type="entry name" value="ANTSNTHASEI"/>
</dbReference>
<dbReference type="SUPFAM" id="SSF56322">
    <property type="entry name" value="ADC synthase"/>
    <property type="match status" value="1"/>
</dbReference>
<keyword id="KW-0028">Amino-acid biosynthesis</keyword>
<keyword id="KW-0057">Aromatic amino acid biosynthesis</keyword>
<keyword id="KW-0150">Chloroplast</keyword>
<keyword id="KW-0456">Lyase</keyword>
<keyword id="KW-0934">Plastid</keyword>
<keyword id="KW-1185">Reference proteome</keyword>
<keyword id="KW-0809">Transit peptide</keyword>
<keyword id="KW-0822">Tryptophan biosynthesis</keyword>
<organism>
    <name type="scientific">Oryza sativa subsp. indica</name>
    <name type="common">Rice</name>
    <dbReference type="NCBI Taxonomy" id="39946"/>
    <lineage>
        <taxon>Eukaryota</taxon>
        <taxon>Viridiplantae</taxon>
        <taxon>Streptophyta</taxon>
        <taxon>Embryophyta</taxon>
        <taxon>Tracheophyta</taxon>
        <taxon>Spermatophyta</taxon>
        <taxon>Magnoliopsida</taxon>
        <taxon>Liliopsida</taxon>
        <taxon>Poales</taxon>
        <taxon>Poaceae</taxon>
        <taxon>BOP clade</taxon>
        <taxon>Oryzoideae</taxon>
        <taxon>Oryzeae</taxon>
        <taxon>Oryzinae</taxon>
        <taxon>Oryza</taxon>
        <taxon>Oryza sativa</taxon>
    </lineage>
</organism>
<protein>
    <recommendedName>
        <fullName>Anthranilate synthase alpha subunit 1, chloroplastic</fullName>
        <ecNumber>4.1.3.27</ecNumber>
    </recommendedName>
</protein>
<feature type="transit peptide" description="Chloroplast" evidence="2">
    <location>
        <begin position="1"/>
        <end position="34"/>
    </location>
</feature>
<feature type="chain" id="PRO_0000425663" description="Anthranilate synthase alpha subunit 1, chloroplastic">
    <location>
        <begin position="35"/>
        <end position="577"/>
    </location>
</feature>
<gene>
    <name type="primary">ASA1</name>
    <name type="ORF">OsI_14147</name>
</gene>